<gene>
    <name evidence="1" type="primary">efp</name>
    <name type="ordered locus">Smed_3478</name>
</gene>
<feature type="chain" id="PRO_1000010860" description="Elongation factor P">
    <location>
        <begin position="1"/>
        <end position="189"/>
    </location>
</feature>
<dbReference type="EMBL" id="CP000738">
    <property type="protein sequence ID" value="ABR62296.1"/>
    <property type="molecule type" value="Genomic_DNA"/>
</dbReference>
<dbReference type="RefSeq" id="WP_012067676.1">
    <property type="nucleotide sequence ID" value="NC_009636.1"/>
</dbReference>
<dbReference type="RefSeq" id="YP_001329131.1">
    <property type="nucleotide sequence ID" value="NC_009636.1"/>
</dbReference>
<dbReference type="SMR" id="A6UF66"/>
<dbReference type="STRING" id="366394.Smed_3478"/>
<dbReference type="GeneID" id="61611031"/>
<dbReference type="KEGG" id="smd:Smed_3478"/>
<dbReference type="PATRIC" id="fig|366394.8.peg.6729"/>
<dbReference type="eggNOG" id="COG0231">
    <property type="taxonomic scope" value="Bacteria"/>
</dbReference>
<dbReference type="HOGENOM" id="CLU_074944_1_1_5"/>
<dbReference type="OrthoDB" id="9801844at2"/>
<dbReference type="UniPathway" id="UPA00345"/>
<dbReference type="Proteomes" id="UP000001108">
    <property type="component" value="Chromosome"/>
</dbReference>
<dbReference type="GO" id="GO:0005737">
    <property type="term" value="C:cytoplasm"/>
    <property type="evidence" value="ECO:0007669"/>
    <property type="project" value="UniProtKB-SubCell"/>
</dbReference>
<dbReference type="GO" id="GO:0003746">
    <property type="term" value="F:translation elongation factor activity"/>
    <property type="evidence" value="ECO:0007669"/>
    <property type="project" value="UniProtKB-UniRule"/>
</dbReference>
<dbReference type="GO" id="GO:0043043">
    <property type="term" value="P:peptide biosynthetic process"/>
    <property type="evidence" value="ECO:0007669"/>
    <property type="project" value="InterPro"/>
</dbReference>
<dbReference type="CDD" id="cd04470">
    <property type="entry name" value="S1_EF-P_repeat_1"/>
    <property type="match status" value="1"/>
</dbReference>
<dbReference type="CDD" id="cd05794">
    <property type="entry name" value="S1_EF-P_repeat_2"/>
    <property type="match status" value="1"/>
</dbReference>
<dbReference type="FunFam" id="2.40.50.140:FF:000004">
    <property type="entry name" value="Elongation factor P"/>
    <property type="match status" value="1"/>
</dbReference>
<dbReference type="FunFam" id="2.40.50.140:FF:000009">
    <property type="entry name" value="Elongation factor P"/>
    <property type="match status" value="1"/>
</dbReference>
<dbReference type="Gene3D" id="2.30.30.30">
    <property type="match status" value="1"/>
</dbReference>
<dbReference type="Gene3D" id="2.40.50.140">
    <property type="entry name" value="Nucleic acid-binding proteins"/>
    <property type="match status" value="2"/>
</dbReference>
<dbReference type="HAMAP" id="MF_00141">
    <property type="entry name" value="EF_P"/>
    <property type="match status" value="1"/>
</dbReference>
<dbReference type="InterPro" id="IPR015365">
    <property type="entry name" value="Elong-fact-P_C"/>
</dbReference>
<dbReference type="InterPro" id="IPR012340">
    <property type="entry name" value="NA-bd_OB-fold"/>
</dbReference>
<dbReference type="InterPro" id="IPR014722">
    <property type="entry name" value="Rib_uL2_dom2"/>
</dbReference>
<dbReference type="InterPro" id="IPR020599">
    <property type="entry name" value="Transl_elong_fac_P/YeiP"/>
</dbReference>
<dbReference type="InterPro" id="IPR013185">
    <property type="entry name" value="Transl_elong_KOW-like"/>
</dbReference>
<dbReference type="InterPro" id="IPR001059">
    <property type="entry name" value="Transl_elong_P/YeiP_cen"/>
</dbReference>
<dbReference type="InterPro" id="IPR013852">
    <property type="entry name" value="Transl_elong_P/YeiP_CS"/>
</dbReference>
<dbReference type="InterPro" id="IPR011768">
    <property type="entry name" value="Transl_elongation_fac_P"/>
</dbReference>
<dbReference type="InterPro" id="IPR008991">
    <property type="entry name" value="Translation_prot_SH3-like_sf"/>
</dbReference>
<dbReference type="NCBIfam" id="TIGR00038">
    <property type="entry name" value="efp"/>
    <property type="match status" value="1"/>
</dbReference>
<dbReference type="NCBIfam" id="NF001810">
    <property type="entry name" value="PRK00529.1"/>
    <property type="match status" value="1"/>
</dbReference>
<dbReference type="PANTHER" id="PTHR30053">
    <property type="entry name" value="ELONGATION FACTOR P"/>
    <property type="match status" value="1"/>
</dbReference>
<dbReference type="PANTHER" id="PTHR30053:SF14">
    <property type="entry name" value="TRANSLATION ELONGATION FACTOR KOW-LIKE DOMAIN-CONTAINING PROTEIN"/>
    <property type="match status" value="1"/>
</dbReference>
<dbReference type="Pfam" id="PF01132">
    <property type="entry name" value="EFP"/>
    <property type="match status" value="1"/>
</dbReference>
<dbReference type="Pfam" id="PF08207">
    <property type="entry name" value="EFP_N"/>
    <property type="match status" value="1"/>
</dbReference>
<dbReference type="Pfam" id="PF09285">
    <property type="entry name" value="Elong-fact-P_C"/>
    <property type="match status" value="1"/>
</dbReference>
<dbReference type="PIRSF" id="PIRSF005901">
    <property type="entry name" value="EF-P"/>
    <property type="match status" value="1"/>
</dbReference>
<dbReference type="SMART" id="SM01185">
    <property type="entry name" value="EFP"/>
    <property type="match status" value="1"/>
</dbReference>
<dbReference type="SMART" id="SM00841">
    <property type="entry name" value="Elong-fact-P_C"/>
    <property type="match status" value="1"/>
</dbReference>
<dbReference type="SUPFAM" id="SSF50249">
    <property type="entry name" value="Nucleic acid-binding proteins"/>
    <property type="match status" value="2"/>
</dbReference>
<dbReference type="SUPFAM" id="SSF50104">
    <property type="entry name" value="Translation proteins SH3-like domain"/>
    <property type="match status" value="1"/>
</dbReference>
<dbReference type="PROSITE" id="PS01275">
    <property type="entry name" value="EFP"/>
    <property type="match status" value="1"/>
</dbReference>
<evidence type="ECO:0000255" key="1">
    <source>
        <dbReference type="HAMAP-Rule" id="MF_00141"/>
    </source>
</evidence>
<keyword id="KW-0963">Cytoplasm</keyword>
<keyword id="KW-0251">Elongation factor</keyword>
<keyword id="KW-0648">Protein biosynthesis</keyword>
<reference key="1">
    <citation type="submission" date="2007-06" db="EMBL/GenBank/DDBJ databases">
        <title>Complete sequence of Sinorhizobium medicae WSM419 chromosome.</title>
        <authorList>
            <consortium name="US DOE Joint Genome Institute"/>
            <person name="Copeland A."/>
            <person name="Lucas S."/>
            <person name="Lapidus A."/>
            <person name="Barry K."/>
            <person name="Glavina del Rio T."/>
            <person name="Dalin E."/>
            <person name="Tice H."/>
            <person name="Pitluck S."/>
            <person name="Chain P."/>
            <person name="Malfatti S."/>
            <person name="Shin M."/>
            <person name="Vergez L."/>
            <person name="Schmutz J."/>
            <person name="Larimer F."/>
            <person name="Land M."/>
            <person name="Hauser L."/>
            <person name="Kyrpides N."/>
            <person name="Mikhailova N."/>
            <person name="Reeve W.G."/>
            <person name="Richardson P."/>
        </authorList>
    </citation>
    <scope>NUCLEOTIDE SEQUENCE [LARGE SCALE GENOMIC DNA]</scope>
    <source>
        <strain>WSM419</strain>
    </source>
</reference>
<name>EFP_SINMW</name>
<protein>
    <recommendedName>
        <fullName evidence="1">Elongation factor P</fullName>
        <shortName evidence="1">EF-P</shortName>
    </recommendedName>
</protein>
<proteinExistence type="inferred from homology"/>
<accession>A6UF66</accession>
<organism>
    <name type="scientific">Sinorhizobium medicae (strain WSM419)</name>
    <name type="common">Ensifer medicae</name>
    <dbReference type="NCBI Taxonomy" id="366394"/>
    <lineage>
        <taxon>Bacteria</taxon>
        <taxon>Pseudomonadati</taxon>
        <taxon>Pseudomonadota</taxon>
        <taxon>Alphaproteobacteria</taxon>
        <taxon>Hyphomicrobiales</taxon>
        <taxon>Rhizobiaceae</taxon>
        <taxon>Sinorhizobium/Ensifer group</taxon>
        <taxon>Sinorhizobium</taxon>
    </lineage>
</organism>
<comment type="function">
    <text evidence="1">Involved in peptide bond synthesis. Stimulates efficient translation and peptide-bond synthesis on native or reconstituted 70S ribosomes in vitro. Probably functions indirectly by altering the affinity of the ribosome for aminoacyl-tRNA, thus increasing their reactivity as acceptors for peptidyl transferase.</text>
</comment>
<comment type="pathway">
    <text evidence="1">Protein biosynthesis; polypeptide chain elongation.</text>
</comment>
<comment type="subcellular location">
    <subcellularLocation>
        <location evidence="1">Cytoplasm</location>
    </subcellularLocation>
</comment>
<comment type="similarity">
    <text evidence="1">Belongs to the elongation factor P family.</text>
</comment>
<sequence length="189" mass="20948">MVKVIASSVRKGNVLDVDGKLYVVLTAQNFHPGKGTPVTQVDMRRISDGVKVSERYRTTEQVERAFVEDREHTFLYEDGEGFHFMNPETYDQLVMSTEDIGDLKAYLQEGMAVMLSIHEGLAIAIDLPRHVTLEIVETEPVVKGQTASSSYKPAVLSNGVRTLVPPHIQAGTRVVIATEDGSYVERAKD</sequence>